<gene>
    <name evidence="1" type="primary">queA</name>
    <name type="ordered locus">Cbei_1532</name>
</gene>
<comment type="function">
    <text evidence="1">Transfers and isomerizes the ribose moiety from AdoMet to the 7-aminomethyl group of 7-deazaguanine (preQ1-tRNA) to give epoxyqueuosine (oQ-tRNA).</text>
</comment>
<comment type="catalytic activity">
    <reaction evidence="1">
        <text>7-aminomethyl-7-carbaguanosine(34) in tRNA + S-adenosyl-L-methionine = epoxyqueuosine(34) in tRNA + adenine + L-methionine + 2 H(+)</text>
        <dbReference type="Rhea" id="RHEA:32155"/>
        <dbReference type="Rhea" id="RHEA-COMP:10342"/>
        <dbReference type="Rhea" id="RHEA-COMP:18582"/>
        <dbReference type="ChEBI" id="CHEBI:15378"/>
        <dbReference type="ChEBI" id="CHEBI:16708"/>
        <dbReference type="ChEBI" id="CHEBI:57844"/>
        <dbReference type="ChEBI" id="CHEBI:59789"/>
        <dbReference type="ChEBI" id="CHEBI:82833"/>
        <dbReference type="ChEBI" id="CHEBI:194443"/>
        <dbReference type="EC" id="2.4.99.17"/>
    </reaction>
</comment>
<comment type="pathway">
    <text evidence="1">tRNA modification; tRNA-queuosine biosynthesis.</text>
</comment>
<comment type="subunit">
    <text evidence="1">Monomer.</text>
</comment>
<comment type="subcellular location">
    <subcellularLocation>
        <location evidence="1">Cytoplasm</location>
    </subcellularLocation>
</comment>
<comment type="similarity">
    <text evidence="1">Belongs to the QueA family.</text>
</comment>
<reference key="1">
    <citation type="submission" date="2007-06" db="EMBL/GenBank/DDBJ databases">
        <title>Complete sequence of Clostridium beijerinckii NCIMB 8052.</title>
        <authorList>
            <consortium name="US DOE Joint Genome Institute"/>
            <person name="Copeland A."/>
            <person name="Lucas S."/>
            <person name="Lapidus A."/>
            <person name="Barry K."/>
            <person name="Detter J.C."/>
            <person name="Glavina del Rio T."/>
            <person name="Hammon N."/>
            <person name="Israni S."/>
            <person name="Dalin E."/>
            <person name="Tice H."/>
            <person name="Pitluck S."/>
            <person name="Sims D."/>
            <person name="Brettin T."/>
            <person name="Bruce D."/>
            <person name="Tapia R."/>
            <person name="Brainard J."/>
            <person name="Schmutz J."/>
            <person name="Larimer F."/>
            <person name="Land M."/>
            <person name="Hauser L."/>
            <person name="Kyrpides N."/>
            <person name="Mikhailova N."/>
            <person name="Bennet G."/>
            <person name="Cann I."/>
            <person name="Chen J.-S."/>
            <person name="Contreras A.L."/>
            <person name="Jones D."/>
            <person name="Kashket E."/>
            <person name="Mitchell W."/>
            <person name="Stoddard S."/>
            <person name="Schwarz W."/>
            <person name="Qureshi N."/>
            <person name="Young M."/>
            <person name="Shi Z."/>
            <person name="Ezeji T."/>
            <person name="White B."/>
            <person name="Blaschek H."/>
            <person name="Richardson P."/>
        </authorList>
    </citation>
    <scope>NUCLEOTIDE SEQUENCE [LARGE SCALE GENOMIC DNA]</scope>
    <source>
        <strain>ATCC 51743 / NCIMB 8052</strain>
    </source>
</reference>
<name>QUEA_CLOB8</name>
<organism>
    <name type="scientific">Clostridium beijerinckii (strain ATCC 51743 / NCIMB 8052)</name>
    <name type="common">Clostridium acetobutylicum</name>
    <dbReference type="NCBI Taxonomy" id="290402"/>
    <lineage>
        <taxon>Bacteria</taxon>
        <taxon>Bacillati</taxon>
        <taxon>Bacillota</taxon>
        <taxon>Clostridia</taxon>
        <taxon>Eubacteriales</taxon>
        <taxon>Clostridiaceae</taxon>
        <taxon>Clostridium</taxon>
    </lineage>
</organism>
<protein>
    <recommendedName>
        <fullName evidence="1">S-adenosylmethionine:tRNA ribosyltransferase-isomerase</fullName>
        <ecNumber evidence="1">2.4.99.17</ecNumber>
    </recommendedName>
    <alternativeName>
        <fullName evidence="1">Queuosine biosynthesis protein QueA</fullName>
    </alternativeName>
</protein>
<feature type="chain" id="PRO_1000075996" description="S-adenosylmethionine:tRNA ribosyltransferase-isomerase">
    <location>
        <begin position="1"/>
        <end position="341"/>
    </location>
</feature>
<proteinExistence type="inferred from homology"/>
<sequence length="341" mass="39064">MNVKDFDFYLPEELIAQHPLEQRDSSRLMVLDKKTGEIKHKKFHDIIEYLNEGDTLVLNNTRVMPARLIGEKEGTGGKIEFLLLKRIEKDRWECLAKPGKSAKVGRKFTFGEGKLKAEVVEVEENGNRIVEFFYDGIFEEVLDSLGEMPLPPYIHERLEDRERYQTVYSKENGSAAAPTAGLHFTKELLQEIKNKGINIVYLTLHVGLGTFRPVKVESLEEHEMHSEFYMLSKESADIINETKKRGNAVISVGTTSTRTLETIGDENGFVKEQSGWTNIFIYPGYKFKVVDKLITNFHLPESTLIMLVSTLAGRENVMNAYEEAVNEKYRFFSFGDAMFIK</sequence>
<evidence type="ECO:0000255" key="1">
    <source>
        <dbReference type="HAMAP-Rule" id="MF_00113"/>
    </source>
</evidence>
<accession>A6LTM8</accession>
<dbReference type="EC" id="2.4.99.17" evidence="1"/>
<dbReference type="EMBL" id="CP000721">
    <property type="protein sequence ID" value="ABR33708.1"/>
    <property type="molecule type" value="Genomic_DNA"/>
</dbReference>
<dbReference type="RefSeq" id="WP_011968860.1">
    <property type="nucleotide sequence ID" value="NC_009617.1"/>
</dbReference>
<dbReference type="SMR" id="A6LTM8"/>
<dbReference type="KEGG" id="cbe:Cbei_1532"/>
<dbReference type="eggNOG" id="COG0809">
    <property type="taxonomic scope" value="Bacteria"/>
</dbReference>
<dbReference type="HOGENOM" id="CLU_039110_1_0_9"/>
<dbReference type="UniPathway" id="UPA00392"/>
<dbReference type="Proteomes" id="UP000000565">
    <property type="component" value="Chromosome"/>
</dbReference>
<dbReference type="GO" id="GO:0005737">
    <property type="term" value="C:cytoplasm"/>
    <property type="evidence" value="ECO:0007669"/>
    <property type="project" value="UniProtKB-SubCell"/>
</dbReference>
<dbReference type="GO" id="GO:0051075">
    <property type="term" value="F:S-adenosylmethionine:tRNA ribosyltransferase-isomerase activity"/>
    <property type="evidence" value="ECO:0007669"/>
    <property type="project" value="UniProtKB-EC"/>
</dbReference>
<dbReference type="GO" id="GO:0008616">
    <property type="term" value="P:queuosine biosynthetic process"/>
    <property type="evidence" value="ECO:0007669"/>
    <property type="project" value="UniProtKB-UniRule"/>
</dbReference>
<dbReference type="GO" id="GO:0002099">
    <property type="term" value="P:tRNA wobble guanine modification"/>
    <property type="evidence" value="ECO:0007669"/>
    <property type="project" value="TreeGrafter"/>
</dbReference>
<dbReference type="FunFam" id="2.40.10.240:FF:000002">
    <property type="entry name" value="S-adenosylmethionine:tRNA ribosyltransferase-isomerase"/>
    <property type="match status" value="1"/>
</dbReference>
<dbReference type="FunFam" id="3.40.1780.10:FF:000001">
    <property type="entry name" value="S-adenosylmethionine:tRNA ribosyltransferase-isomerase"/>
    <property type="match status" value="1"/>
</dbReference>
<dbReference type="Gene3D" id="2.40.10.240">
    <property type="entry name" value="QueA-like"/>
    <property type="match status" value="1"/>
</dbReference>
<dbReference type="Gene3D" id="3.40.1780.10">
    <property type="entry name" value="QueA-like"/>
    <property type="match status" value="1"/>
</dbReference>
<dbReference type="HAMAP" id="MF_00113">
    <property type="entry name" value="QueA"/>
    <property type="match status" value="1"/>
</dbReference>
<dbReference type="InterPro" id="IPR003699">
    <property type="entry name" value="QueA"/>
</dbReference>
<dbReference type="InterPro" id="IPR042118">
    <property type="entry name" value="QueA_dom1"/>
</dbReference>
<dbReference type="InterPro" id="IPR042119">
    <property type="entry name" value="QueA_dom2"/>
</dbReference>
<dbReference type="InterPro" id="IPR036100">
    <property type="entry name" value="QueA_sf"/>
</dbReference>
<dbReference type="NCBIfam" id="NF001140">
    <property type="entry name" value="PRK00147.1"/>
    <property type="match status" value="1"/>
</dbReference>
<dbReference type="NCBIfam" id="TIGR00113">
    <property type="entry name" value="queA"/>
    <property type="match status" value="1"/>
</dbReference>
<dbReference type="PANTHER" id="PTHR30307">
    <property type="entry name" value="S-ADENOSYLMETHIONINE:TRNA RIBOSYLTRANSFERASE-ISOMERASE"/>
    <property type="match status" value="1"/>
</dbReference>
<dbReference type="PANTHER" id="PTHR30307:SF0">
    <property type="entry name" value="S-ADENOSYLMETHIONINE:TRNA RIBOSYLTRANSFERASE-ISOMERASE"/>
    <property type="match status" value="1"/>
</dbReference>
<dbReference type="Pfam" id="PF02547">
    <property type="entry name" value="Queuosine_synth"/>
    <property type="match status" value="1"/>
</dbReference>
<dbReference type="SUPFAM" id="SSF111337">
    <property type="entry name" value="QueA-like"/>
    <property type="match status" value="1"/>
</dbReference>
<keyword id="KW-0963">Cytoplasm</keyword>
<keyword id="KW-0671">Queuosine biosynthesis</keyword>
<keyword id="KW-0949">S-adenosyl-L-methionine</keyword>
<keyword id="KW-0808">Transferase</keyword>